<proteinExistence type="evidence at protein level"/>
<organism>
    <name type="scientific">Rattus norvegicus</name>
    <name type="common">Rat</name>
    <dbReference type="NCBI Taxonomy" id="10116"/>
    <lineage>
        <taxon>Eukaryota</taxon>
        <taxon>Metazoa</taxon>
        <taxon>Chordata</taxon>
        <taxon>Craniata</taxon>
        <taxon>Vertebrata</taxon>
        <taxon>Euteleostomi</taxon>
        <taxon>Mammalia</taxon>
        <taxon>Eutheria</taxon>
        <taxon>Euarchontoglires</taxon>
        <taxon>Glires</taxon>
        <taxon>Rodentia</taxon>
        <taxon>Myomorpha</taxon>
        <taxon>Muroidea</taxon>
        <taxon>Muridae</taxon>
        <taxon>Murinae</taxon>
        <taxon>Rattus</taxon>
    </lineage>
</organism>
<protein>
    <recommendedName>
        <fullName>Spliceosome-associated protein CWC15 homolog</fullName>
    </recommendedName>
</protein>
<sequence length="229" mass="26638">MTTAARPTFEPARGGRGKGEGDLSQLSKQYSSRDLPSHTKIKYRQTTQDAPEEVRNRDFRRELEERERAAAREKNRDRPTREHTTSSSVSKKPRLDQIPAANLDADDPLTDEEDEDFEEESDDDDTAALLAELEKIKKERAEEQARKEQEQKAEEERIRMENILSGNPLLNLTGPSQPQANFKVKRRWDDDVVFKNCAKGIDDQKKDKRFVNDTLRSEFHKKFMEKYIK</sequence>
<name>CWC15_RAT</name>
<dbReference type="EMBL" id="BC091396">
    <property type="protein sequence ID" value="AAH91396.1"/>
    <property type="molecule type" value="mRNA"/>
</dbReference>
<dbReference type="RefSeq" id="NP_001020158.1">
    <property type="nucleotide sequence ID" value="NM_001024987.1"/>
</dbReference>
<dbReference type="RefSeq" id="XP_006242582.1">
    <property type="nucleotide sequence ID" value="XM_006242520.5"/>
</dbReference>
<dbReference type="RefSeq" id="XP_038936913.1">
    <property type="nucleotide sequence ID" value="XM_039080985.2"/>
</dbReference>
<dbReference type="SMR" id="Q5BJP2"/>
<dbReference type="FunCoup" id="Q5BJP2">
    <property type="interactions" value="3702"/>
</dbReference>
<dbReference type="STRING" id="10116.ENSRNOP00000011856"/>
<dbReference type="iPTMnet" id="Q5BJP2"/>
<dbReference type="PhosphoSitePlus" id="Q5BJP2"/>
<dbReference type="PaxDb" id="10116-ENSRNOP00000011856"/>
<dbReference type="Ensembl" id="ENSRNOT00000011855.6">
    <property type="protein sequence ID" value="ENSRNOP00000011856.4"/>
    <property type="gene ID" value="ENSRNOG00000008490.6"/>
</dbReference>
<dbReference type="GeneID" id="300361"/>
<dbReference type="KEGG" id="rno:300361"/>
<dbReference type="UCSC" id="RGD:1310669">
    <property type="organism name" value="rat"/>
</dbReference>
<dbReference type="AGR" id="RGD:1310669"/>
<dbReference type="CTD" id="51503"/>
<dbReference type="RGD" id="1310669">
    <property type="gene designation" value="Cwc15"/>
</dbReference>
<dbReference type="eggNOG" id="KOG3228">
    <property type="taxonomic scope" value="Eukaryota"/>
</dbReference>
<dbReference type="GeneTree" id="ENSGT00390000012084"/>
<dbReference type="HOGENOM" id="CLU_068312_0_1_1"/>
<dbReference type="InParanoid" id="Q5BJP2"/>
<dbReference type="OMA" id="KYREHGQ"/>
<dbReference type="OrthoDB" id="30179at2759"/>
<dbReference type="PhylomeDB" id="Q5BJP2"/>
<dbReference type="TreeFam" id="TF321323"/>
<dbReference type="Reactome" id="R-RNO-72163">
    <property type="pathway name" value="mRNA Splicing - Major Pathway"/>
</dbReference>
<dbReference type="PRO" id="PR:Q5BJP2"/>
<dbReference type="Proteomes" id="UP000002494">
    <property type="component" value="Chromosome 8"/>
</dbReference>
<dbReference type="Bgee" id="ENSRNOG00000008490">
    <property type="expression patterns" value="Expressed in heart and 19 other cell types or tissues"/>
</dbReference>
<dbReference type="GO" id="GO:0071013">
    <property type="term" value="C:catalytic step 2 spliceosome"/>
    <property type="evidence" value="ECO:0000266"/>
    <property type="project" value="RGD"/>
</dbReference>
<dbReference type="GO" id="GO:0005634">
    <property type="term" value="C:nucleus"/>
    <property type="evidence" value="ECO:0000250"/>
    <property type="project" value="UniProtKB"/>
</dbReference>
<dbReference type="GO" id="GO:0000974">
    <property type="term" value="C:Prp19 complex"/>
    <property type="evidence" value="ECO:0000266"/>
    <property type="project" value="RGD"/>
</dbReference>
<dbReference type="GO" id="GO:0005681">
    <property type="term" value="C:spliceosomal complex"/>
    <property type="evidence" value="ECO:0000250"/>
    <property type="project" value="UniProtKB"/>
</dbReference>
<dbReference type="GO" id="GO:0071007">
    <property type="term" value="C:U2-type catalytic step 2 spliceosome"/>
    <property type="evidence" value="ECO:0000250"/>
    <property type="project" value="UniProtKB"/>
</dbReference>
<dbReference type="GO" id="GO:0003723">
    <property type="term" value="F:RNA binding"/>
    <property type="evidence" value="ECO:0000250"/>
    <property type="project" value="UniProtKB"/>
</dbReference>
<dbReference type="GO" id="GO:0045292">
    <property type="term" value="P:mRNA cis splicing, via spliceosome"/>
    <property type="evidence" value="ECO:0000318"/>
    <property type="project" value="GO_Central"/>
</dbReference>
<dbReference type="GO" id="GO:0000398">
    <property type="term" value="P:mRNA splicing, via spliceosome"/>
    <property type="evidence" value="ECO:0000250"/>
    <property type="project" value="UniProtKB"/>
</dbReference>
<dbReference type="InterPro" id="IPR006973">
    <property type="entry name" value="Cwf_Cwc_15"/>
</dbReference>
<dbReference type="PANTHER" id="PTHR12718">
    <property type="entry name" value="CELL CYCLE CONTROL PROTEIN CWF15"/>
    <property type="match status" value="1"/>
</dbReference>
<dbReference type="PANTHER" id="PTHR12718:SF2">
    <property type="entry name" value="SPLICEOSOME-ASSOCIATED PROTEIN CWC15 HOMOLOG"/>
    <property type="match status" value="1"/>
</dbReference>
<dbReference type="Pfam" id="PF04889">
    <property type="entry name" value="Cwf_Cwc_15"/>
    <property type="match status" value="1"/>
</dbReference>
<accession>Q5BJP2</accession>
<reference key="1">
    <citation type="journal article" date="2004" name="Genome Res.">
        <title>The status, quality, and expansion of the NIH full-length cDNA project: the Mammalian Gene Collection (MGC).</title>
        <authorList>
            <consortium name="The MGC Project Team"/>
        </authorList>
    </citation>
    <scope>NUCLEOTIDE SEQUENCE [LARGE SCALE MRNA]</scope>
    <source>
        <tissue>Liver</tissue>
    </source>
</reference>
<reference key="2">
    <citation type="journal article" date="2012" name="Nat. Commun.">
        <title>Quantitative maps of protein phosphorylation sites across 14 different rat organs and tissues.</title>
        <authorList>
            <person name="Lundby A."/>
            <person name="Secher A."/>
            <person name="Lage K."/>
            <person name="Nordsborg N.B."/>
            <person name="Dmytriyev A."/>
            <person name="Lundby C."/>
            <person name="Olsen J.V."/>
        </authorList>
    </citation>
    <scope>PHOSPHORYLATION [LARGE SCALE ANALYSIS] AT THR-110 AND SER-121</scope>
    <scope>IDENTIFICATION BY MASS SPECTROMETRY [LARGE SCALE ANALYSIS]</scope>
</reference>
<gene>
    <name type="primary">Cwc15</name>
</gene>
<keyword id="KW-0007">Acetylation</keyword>
<keyword id="KW-0175">Coiled coil</keyword>
<keyword id="KW-0507">mRNA processing</keyword>
<keyword id="KW-0508">mRNA splicing</keyword>
<keyword id="KW-0539">Nucleus</keyword>
<keyword id="KW-0597">Phosphoprotein</keyword>
<keyword id="KW-1185">Reference proteome</keyword>
<keyword id="KW-0747">Spliceosome</keyword>
<feature type="initiator methionine" description="Removed" evidence="2">
    <location>
        <position position="1"/>
    </location>
</feature>
<feature type="chain" id="PRO_0000291546" description="Spliceosome-associated protein CWC15 homolog">
    <location>
        <begin position="2"/>
        <end position="229"/>
    </location>
</feature>
<feature type="region of interest" description="Disordered" evidence="4">
    <location>
        <begin position="1"/>
        <end position="133"/>
    </location>
</feature>
<feature type="coiled-coil region" evidence="3">
    <location>
        <begin position="123"/>
        <end position="165"/>
    </location>
</feature>
<feature type="compositionally biased region" description="Polar residues" evidence="4">
    <location>
        <begin position="24"/>
        <end position="34"/>
    </location>
</feature>
<feature type="compositionally biased region" description="Basic and acidic residues" evidence="4">
    <location>
        <begin position="52"/>
        <end position="84"/>
    </location>
</feature>
<feature type="compositionally biased region" description="Acidic residues" evidence="4">
    <location>
        <begin position="104"/>
        <end position="126"/>
    </location>
</feature>
<feature type="modified residue" description="N-acetylthreonine" evidence="2">
    <location>
        <position position="2"/>
    </location>
</feature>
<feature type="modified residue" description="N6-acetyllysine" evidence="1">
    <location>
        <position position="18"/>
    </location>
</feature>
<feature type="modified residue" description="Phosphothreonine" evidence="2">
    <location>
        <position position="47"/>
    </location>
</feature>
<feature type="modified residue" description="Phosphothreonine" evidence="6">
    <location>
        <position position="110"/>
    </location>
</feature>
<feature type="modified residue" description="Phosphoserine" evidence="6">
    <location>
        <position position="121"/>
    </location>
</feature>
<comment type="function">
    <text evidence="2">Involved in pre-mRNA splicing as component of the spliceosome. Component of the PRP19-CDC5L complex that forms an integral part of the spliceosome and is required for activating pre-mRNA splicing. As a component of the minor spliceosome, involved in the splicing of U12-type introns in pre-mRNAs (By similarity).</text>
</comment>
<comment type="subunit">
    <text evidence="2">Identified in the spliceosome C complex. Component of the PRP19-CDC5L splicing complex composed of a core complex comprising a homotetramer of PRPF19, CDC5L, PLRG1 and BCAS2, and at least three less stably associated proteins CTNNBL1, CWC15 and HSPA8. Interacts directly with CTNNBL1 in the complex. Component of the minor spliceosome, which splices U12-type introns (By similarity).</text>
</comment>
<comment type="subcellular location">
    <subcellularLocation>
        <location evidence="2">Nucleus</location>
    </subcellularLocation>
</comment>
<comment type="similarity">
    <text evidence="5">Belongs to the CWC15 family.</text>
</comment>
<evidence type="ECO:0000250" key="1">
    <source>
        <dbReference type="UniProtKB" id="Q9JHS9"/>
    </source>
</evidence>
<evidence type="ECO:0000250" key="2">
    <source>
        <dbReference type="UniProtKB" id="Q9P013"/>
    </source>
</evidence>
<evidence type="ECO:0000255" key="3"/>
<evidence type="ECO:0000256" key="4">
    <source>
        <dbReference type="SAM" id="MobiDB-lite"/>
    </source>
</evidence>
<evidence type="ECO:0000305" key="5"/>
<evidence type="ECO:0007744" key="6">
    <source>
    </source>
</evidence>